<keyword id="KW-0687">Ribonucleoprotein</keyword>
<keyword id="KW-0689">Ribosomal protein</keyword>
<feature type="chain" id="PRO_1000017429" description="Large ribosomal subunit protein bL27">
    <location>
        <begin position="1"/>
        <end position="87"/>
    </location>
</feature>
<feature type="region of interest" description="Disordered" evidence="2">
    <location>
        <begin position="1"/>
        <end position="21"/>
    </location>
</feature>
<protein>
    <recommendedName>
        <fullName evidence="1">Large ribosomal subunit protein bL27</fullName>
    </recommendedName>
    <alternativeName>
        <fullName evidence="3">50S ribosomal protein L27</fullName>
    </alternativeName>
</protein>
<dbReference type="EMBL" id="CP000548">
    <property type="protein sequence ID" value="ABO06332.1"/>
    <property type="molecule type" value="Genomic_DNA"/>
</dbReference>
<dbReference type="RefSeq" id="WP_004194025.1">
    <property type="nucleotide sequence ID" value="NZ_CP007802.1"/>
</dbReference>
<dbReference type="SMR" id="A3MR89"/>
<dbReference type="GeneID" id="93061604"/>
<dbReference type="KEGG" id="bmaz:BM44_109"/>
<dbReference type="KEGG" id="bmn:BMA10247_3259"/>
<dbReference type="PATRIC" id="fig|320389.8.peg.117"/>
<dbReference type="GO" id="GO:0022625">
    <property type="term" value="C:cytosolic large ribosomal subunit"/>
    <property type="evidence" value="ECO:0007669"/>
    <property type="project" value="TreeGrafter"/>
</dbReference>
<dbReference type="GO" id="GO:0003735">
    <property type="term" value="F:structural constituent of ribosome"/>
    <property type="evidence" value="ECO:0007669"/>
    <property type="project" value="InterPro"/>
</dbReference>
<dbReference type="GO" id="GO:0006412">
    <property type="term" value="P:translation"/>
    <property type="evidence" value="ECO:0007669"/>
    <property type="project" value="UniProtKB-UniRule"/>
</dbReference>
<dbReference type="FunFam" id="2.40.50.100:FF:000001">
    <property type="entry name" value="50S ribosomal protein L27"/>
    <property type="match status" value="1"/>
</dbReference>
<dbReference type="Gene3D" id="2.40.50.100">
    <property type="match status" value="1"/>
</dbReference>
<dbReference type="HAMAP" id="MF_00539">
    <property type="entry name" value="Ribosomal_bL27"/>
    <property type="match status" value="1"/>
</dbReference>
<dbReference type="InterPro" id="IPR001684">
    <property type="entry name" value="Ribosomal_bL27"/>
</dbReference>
<dbReference type="InterPro" id="IPR018261">
    <property type="entry name" value="Ribosomal_bL27_CS"/>
</dbReference>
<dbReference type="NCBIfam" id="TIGR00062">
    <property type="entry name" value="L27"/>
    <property type="match status" value="1"/>
</dbReference>
<dbReference type="PANTHER" id="PTHR15893:SF0">
    <property type="entry name" value="LARGE RIBOSOMAL SUBUNIT PROTEIN BL27M"/>
    <property type="match status" value="1"/>
</dbReference>
<dbReference type="PANTHER" id="PTHR15893">
    <property type="entry name" value="RIBOSOMAL PROTEIN L27"/>
    <property type="match status" value="1"/>
</dbReference>
<dbReference type="Pfam" id="PF01016">
    <property type="entry name" value="Ribosomal_L27"/>
    <property type="match status" value="1"/>
</dbReference>
<dbReference type="PRINTS" id="PR00063">
    <property type="entry name" value="RIBOSOMALL27"/>
</dbReference>
<dbReference type="SUPFAM" id="SSF110324">
    <property type="entry name" value="Ribosomal L27 protein-like"/>
    <property type="match status" value="1"/>
</dbReference>
<dbReference type="PROSITE" id="PS00831">
    <property type="entry name" value="RIBOSOMAL_L27"/>
    <property type="match status" value="1"/>
</dbReference>
<name>RL27_BURM7</name>
<reference key="1">
    <citation type="journal article" date="2010" name="Genome Biol. Evol.">
        <title>Continuing evolution of Burkholderia mallei through genome reduction and large-scale rearrangements.</title>
        <authorList>
            <person name="Losada L."/>
            <person name="Ronning C.M."/>
            <person name="DeShazer D."/>
            <person name="Woods D."/>
            <person name="Fedorova N."/>
            <person name="Kim H.S."/>
            <person name="Shabalina S.A."/>
            <person name="Pearson T.R."/>
            <person name="Brinkac L."/>
            <person name="Tan P."/>
            <person name="Nandi T."/>
            <person name="Crabtree J."/>
            <person name="Badger J."/>
            <person name="Beckstrom-Sternberg S."/>
            <person name="Saqib M."/>
            <person name="Schutzer S.E."/>
            <person name="Keim P."/>
            <person name="Nierman W.C."/>
        </authorList>
    </citation>
    <scope>NUCLEOTIDE SEQUENCE [LARGE SCALE GENOMIC DNA]</scope>
    <source>
        <strain>NCTC 10247</strain>
    </source>
</reference>
<organism>
    <name type="scientific">Burkholderia mallei (strain NCTC 10247)</name>
    <dbReference type="NCBI Taxonomy" id="320389"/>
    <lineage>
        <taxon>Bacteria</taxon>
        <taxon>Pseudomonadati</taxon>
        <taxon>Pseudomonadota</taxon>
        <taxon>Betaproteobacteria</taxon>
        <taxon>Burkholderiales</taxon>
        <taxon>Burkholderiaceae</taxon>
        <taxon>Burkholderia</taxon>
        <taxon>pseudomallei group</taxon>
    </lineage>
</organism>
<sequence>MAHKKAGGSSRNGRDSESKRLGVKVYGGQAINAGGIIVRQRGTRMHAGENVGMGKDHTLFALVDGHVKFTTKGAAKKHTVVVVPAAA</sequence>
<evidence type="ECO:0000255" key="1">
    <source>
        <dbReference type="HAMAP-Rule" id="MF_00539"/>
    </source>
</evidence>
<evidence type="ECO:0000256" key="2">
    <source>
        <dbReference type="SAM" id="MobiDB-lite"/>
    </source>
</evidence>
<evidence type="ECO:0000305" key="3"/>
<gene>
    <name evidence="1" type="primary">rpmA</name>
    <name type="ordered locus">BMA10247_3259</name>
</gene>
<accession>A3MR89</accession>
<proteinExistence type="inferred from homology"/>
<comment type="similarity">
    <text evidence="1">Belongs to the bacterial ribosomal protein bL27 family.</text>
</comment>